<proteinExistence type="inferred from homology"/>
<protein>
    <recommendedName>
        <fullName evidence="1">Uracil-DNA glycosylase</fullName>
        <shortName evidence="1">UDG</shortName>
        <ecNumber evidence="1">3.2.2.27</ecNumber>
    </recommendedName>
    <alternativeName>
        <fullName evidence="1">UNG</fullName>
    </alternativeName>
</protein>
<name>UNG_EHV2</name>
<organism>
    <name type="scientific">Equine herpesvirus 2 (strain 86/87)</name>
    <name type="common">EHV-2</name>
    <dbReference type="NCBI Taxonomy" id="82831"/>
    <lineage>
        <taxon>Viruses</taxon>
        <taxon>Duplodnaviria</taxon>
        <taxon>Heunggongvirae</taxon>
        <taxon>Peploviricota</taxon>
        <taxon>Herviviricetes</taxon>
        <taxon>Herpesvirales</taxon>
        <taxon>Orthoherpesviridae</taxon>
        <taxon>Gammaherpesvirinae</taxon>
        <taxon>Percavirus</taxon>
        <taxon>Percavirus equidgamma2</taxon>
        <taxon>Equid gammaherpesvirus 2</taxon>
    </lineage>
</organism>
<gene>
    <name type="ORF">46</name>
</gene>
<sequence length="255" mass="29099">MERWLQLHVWSKDQQDQDQEHLLDEKIPINRAWMDFLQMSPFLKRKLVTLLETVAKLRTSTVVYPGEERVFSWSWLCEPTQVKVIILGQDPYHGGQATGLAFSVSKTDPVPPSLRNIFLEVSACDSQFAVPLHGCLNNWARQGVLLLNTILTVEKGKPGSHSDLGWIWFTNYIISCLSNQLDHCVFMLWGSKAIEKASLINTNKHLVLKSQHPSPLAARSNRPSLWPKFLGCGHFKQANEYLELHGKCPVDWNLD</sequence>
<feature type="chain" id="PRO_0000176192" description="Uracil-DNA glycosylase">
    <location>
        <begin position="1"/>
        <end position="255"/>
    </location>
</feature>
<feature type="active site" description="Proton acceptor" evidence="1">
    <location>
        <position position="90"/>
    </location>
</feature>
<reference key="1">
    <citation type="journal article" date="1995" name="J. Mol. Biol.">
        <title>The DNA sequence of equine herpesvirus 2.</title>
        <authorList>
            <person name="Telford E.A.R."/>
            <person name="Watson M.S."/>
            <person name="Aird H.C."/>
            <person name="Perry J."/>
            <person name="Davison A.J."/>
        </authorList>
    </citation>
    <scope>NUCLEOTIDE SEQUENCE [LARGE SCALE GENOMIC DNA]</scope>
</reference>
<reference key="2">
    <citation type="submission" date="2015-01" db="EMBL/GenBank/DDBJ databases">
        <authorList>
            <person name="Davison A.J."/>
        </authorList>
    </citation>
    <scope>SEQUENCE REVISION</scope>
</reference>
<evidence type="ECO:0000255" key="1">
    <source>
        <dbReference type="HAMAP-Rule" id="MF_04046"/>
    </source>
</evidence>
<keyword id="KW-0227">DNA damage</keyword>
<keyword id="KW-0234">DNA repair</keyword>
<keyword id="KW-1048">Host nucleus</keyword>
<keyword id="KW-0378">Hydrolase</keyword>
<keyword id="KW-1185">Reference proteome</keyword>
<dbReference type="EC" id="3.2.2.27" evidence="1"/>
<dbReference type="EMBL" id="U20824">
    <property type="protein sequence ID" value="AAC13834.2"/>
    <property type="molecule type" value="Genomic_DNA"/>
</dbReference>
<dbReference type="PIR" id="S55641">
    <property type="entry name" value="S55641"/>
</dbReference>
<dbReference type="SMR" id="P53765"/>
<dbReference type="KEGG" id="vg:1461089"/>
<dbReference type="Proteomes" id="UP000007083">
    <property type="component" value="Segment"/>
</dbReference>
<dbReference type="GO" id="GO:0042025">
    <property type="term" value="C:host cell nucleus"/>
    <property type="evidence" value="ECO:0007669"/>
    <property type="project" value="UniProtKB-SubCell"/>
</dbReference>
<dbReference type="GO" id="GO:0004844">
    <property type="term" value="F:uracil DNA N-glycosylase activity"/>
    <property type="evidence" value="ECO:0007669"/>
    <property type="project" value="UniProtKB-EC"/>
</dbReference>
<dbReference type="GO" id="GO:0097510">
    <property type="term" value="P:base-excision repair, AP site formation via deaminated base removal"/>
    <property type="evidence" value="ECO:0007669"/>
    <property type="project" value="TreeGrafter"/>
</dbReference>
<dbReference type="CDD" id="cd10027">
    <property type="entry name" value="UDG-F1-like"/>
    <property type="match status" value="1"/>
</dbReference>
<dbReference type="Gene3D" id="3.40.470.10">
    <property type="entry name" value="Uracil-DNA glycosylase-like domain"/>
    <property type="match status" value="1"/>
</dbReference>
<dbReference type="HAMAP" id="MF_00148">
    <property type="entry name" value="UDG"/>
    <property type="match status" value="1"/>
</dbReference>
<dbReference type="InterPro" id="IPR002043">
    <property type="entry name" value="UDG_fam1"/>
</dbReference>
<dbReference type="InterPro" id="IPR018085">
    <property type="entry name" value="Ura-DNA_Glyclase_AS"/>
</dbReference>
<dbReference type="InterPro" id="IPR005122">
    <property type="entry name" value="Uracil-DNA_glycosylase-like"/>
</dbReference>
<dbReference type="InterPro" id="IPR036895">
    <property type="entry name" value="Uracil-DNA_glycosylase-like_sf"/>
</dbReference>
<dbReference type="NCBIfam" id="NF003588">
    <property type="entry name" value="PRK05254.1-1"/>
    <property type="match status" value="1"/>
</dbReference>
<dbReference type="NCBIfam" id="NF003589">
    <property type="entry name" value="PRK05254.1-2"/>
    <property type="match status" value="1"/>
</dbReference>
<dbReference type="NCBIfam" id="NF003592">
    <property type="entry name" value="PRK05254.1-5"/>
    <property type="match status" value="1"/>
</dbReference>
<dbReference type="NCBIfam" id="TIGR00628">
    <property type="entry name" value="ung"/>
    <property type="match status" value="1"/>
</dbReference>
<dbReference type="PANTHER" id="PTHR11264">
    <property type="entry name" value="URACIL-DNA GLYCOSYLASE"/>
    <property type="match status" value="1"/>
</dbReference>
<dbReference type="PANTHER" id="PTHR11264:SF0">
    <property type="entry name" value="URACIL-DNA GLYCOSYLASE"/>
    <property type="match status" value="1"/>
</dbReference>
<dbReference type="Pfam" id="PF03167">
    <property type="entry name" value="UDG"/>
    <property type="match status" value="1"/>
</dbReference>
<dbReference type="SMART" id="SM00986">
    <property type="entry name" value="UDG"/>
    <property type="match status" value="1"/>
</dbReference>
<dbReference type="SMART" id="SM00987">
    <property type="entry name" value="UreE_C"/>
    <property type="match status" value="1"/>
</dbReference>
<dbReference type="SUPFAM" id="SSF52141">
    <property type="entry name" value="Uracil-DNA glycosylase-like"/>
    <property type="match status" value="1"/>
</dbReference>
<dbReference type="PROSITE" id="PS00130">
    <property type="entry name" value="U_DNA_GLYCOSYLASE"/>
    <property type="match status" value="1"/>
</dbReference>
<accession>P53765</accession>
<comment type="function">
    <text evidence="1">Excises uracil residues from the DNA which can arise as a result of misincorporation of dUMP residues by DNA polymerase or deamination of cytosines. Therefore may reduce deleterious uracil incorporation into the viral genome, particularly in terminally differentiated cells which lack DNA repair enzymes.</text>
</comment>
<comment type="catalytic activity">
    <reaction evidence="1">
        <text>Hydrolyzes single-stranded DNA or mismatched double-stranded DNA and polynucleotides, releasing free uracil.</text>
        <dbReference type="EC" id="3.2.2.27"/>
    </reaction>
</comment>
<comment type="subcellular location">
    <subcellularLocation>
        <location evidence="1">Host nucleus</location>
    </subcellularLocation>
</comment>
<comment type="similarity">
    <text evidence="1">Belongs to the uracil-DNA glycosylase (UDG) superfamily. UNG family.</text>
</comment>
<organismHost>
    <name type="scientific">Equus caballus</name>
    <name type="common">Horse</name>
    <dbReference type="NCBI Taxonomy" id="9796"/>
</organismHost>